<reference key="1">
    <citation type="journal article" date="1998" name="Nature">
        <title>Deciphering the biology of Mycobacterium tuberculosis from the complete genome sequence.</title>
        <authorList>
            <person name="Cole S.T."/>
            <person name="Brosch R."/>
            <person name="Parkhill J."/>
            <person name="Garnier T."/>
            <person name="Churcher C.M."/>
            <person name="Harris D.E."/>
            <person name="Gordon S.V."/>
            <person name="Eiglmeier K."/>
            <person name="Gas S."/>
            <person name="Barry C.E. III"/>
            <person name="Tekaia F."/>
            <person name="Badcock K."/>
            <person name="Basham D."/>
            <person name="Brown D."/>
            <person name="Chillingworth T."/>
            <person name="Connor R."/>
            <person name="Davies R.M."/>
            <person name="Devlin K."/>
            <person name="Feltwell T."/>
            <person name="Gentles S."/>
            <person name="Hamlin N."/>
            <person name="Holroyd S."/>
            <person name="Hornsby T."/>
            <person name="Jagels K."/>
            <person name="Krogh A."/>
            <person name="McLean J."/>
            <person name="Moule S."/>
            <person name="Murphy L.D."/>
            <person name="Oliver S."/>
            <person name="Osborne J."/>
            <person name="Quail M.A."/>
            <person name="Rajandream M.A."/>
            <person name="Rogers J."/>
            <person name="Rutter S."/>
            <person name="Seeger K."/>
            <person name="Skelton S."/>
            <person name="Squares S."/>
            <person name="Squares R."/>
            <person name="Sulston J.E."/>
            <person name="Taylor K."/>
            <person name="Whitehead S."/>
            <person name="Barrell B.G."/>
        </authorList>
    </citation>
    <scope>NUCLEOTIDE SEQUENCE [LARGE SCALE GENOMIC DNA]</scope>
    <source>
        <strain>ATCC 25618 / H37Rv</strain>
    </source>
</reference>
<reference key="2">
    <citation type="journal article" date="2001" name="Mol. Microbiol.">
        <title>The Mycobacterium tuberculosis ECF sigma factor sigmaE: role in global gene expression and survival in macrophages.</title>
        <authorList>
            <person name="Manganelli R."/>
            <person name="Voskuil M.I."/>
            <person name="Schoolnik G.K."/>
            <person name="Smith I."/>
        </authorList>
    </citation>
    <scope>INDUCTION SIGE-DEPENDENT</scope>
    <source>
        <strain>ATCC 25618 / H37Rv</strain>
    </source>
</reference>
<reference key="3">
    <citation type="journal article" date="2001" name="Proc. Natl. Acad. Sci. U.S.A.">
        <title>Mycobacterium tuberculosis signal transduction system required for persistent infections.</title>
        <authorList>
            <person name="Zahrt T.C."/>
            <person name="Deretic V."/>
        </authorList>
    </citation>
    <scope>FUNCTION DURING STAGES OF PERSISTENT INFECTION</scope>
    <scope>INDUCTION</scope>
    <source>
        <strain>ATCC 25618 / H37Rv</strain>
    </source>
</reference>
<reference key="4">
    <citation type="journal article" date="2003" name="Infect. Immun.">
        <title>Functional analysis of the Mycobacterium tuberculosis MprAB two-component signal transduction system.</title>
        <authorList>
            <person name="Zahrt T.C."/>
            <person name="Wozniak C."/>
            <person name="Jones D."/>
            <person name="Trevett A."/>
        </authorList>
    </citation>
    <scope>FUNCTION AS A TRANSCRIPTIONAL REGULATOR</scope>
    <scope>PHOSPHORYLATION AT ASP-48 BY MPRB</scope>
    <scope>MUTAGENESIS OF ASP-48 AND ASP-53</scope>
    <source>
        <strain>ATCC 25618 / H37Rv</strain>
    </source>
</reference>
<reference key="5">
    <citation type="journal article" date="2005" name="J. Bacteriol.">
        <title>Identification and characterization of a regulatory sequence recognized by Mycobacterium tuberculosis persistence regulator MprA.</title>
        <authorList>
            <person name="He H."/>
            <person name="Zahrt T.C."/>
        </authorList>
    </citation>
    <scope>FUNCTION AS A TRANSCRIPTIONAL REGULATOR</scope>
    <scope>SUBUNIT</scope>
    <scope>AUTOREGULATION</scope>
    <scope>DNA-BINDING</scope>
    <scope>MUTAGENESIS OF ASP-48</scope>
    <source>
        <strain>ATCC 25618 / H37Rv</strain>
    </source>
</reference>
<reference key="6">
    <citation type="journal article" date="2006" name="J. Bacteriol.">
        <title>MprAB is a stress-responsive two-component system that directly regulates expression of sigma factors SigB and SigE in Mycobacterium tuberculosis.</title>
        <authorList>
            <person name="He H."/>
            <person name="Hovey R."/>
            <person name="Kane J."/>
            <person name="Singh V."/>
            <person name="Zahrt T.C."/>
        </authorList>
    </citation>
    <scope>FUNCTION IN STRESS RESPONSE</scope>
    <scope>INDUCTION</scope>
    <scope>DNA-BINDING</scope>
    <scope>MUTAGENESIS OF ASP-48</scope>
    <source>
        <strain>ATCC 25618 / H37Rv</strain>
    </source>
</reference>
<reference key="7">
    <citation type="journal article" date="2007" name="Microbiology">
        <title>Evidence for complex interactions of stress-associated regulons in an mprAB deletion mutant of Mycobacterium tuberculosis.</title>
        <authorList>
            <person name="Pang X."/>
            <person name="Vu P."/>
            <person name="Byrd T.F."/>
            <person name="Ghanny S."/>
            <person name="Soteropoulos P."/>
            <person name="Mukamolova G.V."/>
            <person name="Wu S."/>
            <person name="Samten B."/>
            <person name="Howard S.T."/>
        </authorList>
    </citation>
    <scope>FUNCTION DURING NORMAL GROWTH CONDITION AND UNDER STRESS</scope>
    <source>
        <strain>ATCC 25618 / H37Rv</strain>
    </source>
</reference>
<reference key="8">
    <citation type="journal article" date="2011" name="Mol. Cell. Proteomics">
        <title>Proteogenomic analysis of Mycobacterium tuberculosis by high resolution mass spectrometry.</title>
        <authorList>
            <person name="Kelkar D.S."/>
            <person name="Kumar D."/>
            <person name="Kumar P."/>
            <person name="Balakrishnan L."/>
            <person name="Muthusamy B."/>
            <person name="Yadav A.K."/>
            <person name="Shrivastava P."/>
            <person name="Marimuthu A."/>
            <person name="Anand S."/>
            <person name="Sundaram H."/>
            <person name="Kingsbury R."/>
            <person name="Harsha H.C."/>
            <person name="Nair B."/>
            <person name="Prasad T.S."/>
            <person name="Chauhan D.S."/>
            <person name="Katoch K."/>
            <person name="Katoch V.M."/>
            <person name="Kumar P."/>
            <person name="Chaerkady R."/>
            <person name="Ramachandran S."/>
            <person name="Dash D."/>
            <person name="Pandey A."/>
        </authorList>
    </citation>
    <scope>IDENTIFICATION BY MASS SPECTROMETRY [LARGE SCALE ANALYSIS]</scope>
    <source>
        <strain>ATCC 25618 / H37Rv</strain>
    </source>
</reference>
<protein>
    <recommendedName>
        <fullName>Response regulator MprA</fullName>
    </recommendedName>
    <alternativeName>
        <fullName>Mycobacterial persistence regulator A</fullName>
    </alternativeName>
</protein>
<name>MPRA_MYCTU</name>
<feature type="chain" id="PRO_0000308427" description="Response regulator MprA">
    <location>
        <begin position="1"/>
        <end position="230"/>
    </location>
</feature>
<feature type="domain" description="Response regulatory" evidence="1">
    <location>
        <begin position="4"/>
        <end position="118"/>
    </location>
</feature>
<feature type="DNA-binding region" description="OmpR/PhoB-type" evidence="2">
    <location>
        <begin position="129"/>
        <end position="227"/>
    </location>
</feature>
<feature type="modified residue" description="4-aspartylphosphate" evidence="10">
    <location>
        <position position="48"/>
    </location>
</feature>
<feature type="mutagenesis site" description="Abolishes phosphorylation. No loss of DNA-binding activity in vitro." evidence="5 6 7">
    <original>D</original>
    <variation>A</variation>
    <location>
        <position position="48"/>
    </location>
</feature>
<feature type="mutagenesis site" description="No loss of phosphorylation." evidence="5">
    <original>D</original>
    <variation>A</variation>
    <location>
        <position position="53"/>
    </location>
</feature>
<evidence type="ECO:0000255" key="1">
    <source>
        <dbReference type="PROSITE-ProRule" id="PRU00169"/>
    </source>
</evidence>
<evidence type="ECO:0000255" key="2">
    <source>
        <dbReference type="PROSITE-ProRule" id="PRU01091"/>
    </source>
</evidence>
<evidence type="ECO:0000269" key="3">
    <source>
    </source>
</evidence>
<evidence type="ECO:0000269" key="4">
    <source>
    </source>
</evidence>
<evidence type="ECO:0000269" key="5">
    <source>
    </source>
</evidence>
<evidence type="ECO:0000269" key="6">
    <source>
    </source>
</evidence>
<evidence type="ECO:0000269" key="7">
    <source>
    </source>
</evidence>
<evidence type="ECO:0000269" key="8">
    <source>
    </source>
</evidence>
<evidence type="ECO:0000305" key="9"/>
<evidence type="ECO:0000305" key="10">
    <source>
    </source>
</evidence>
<evidence type="ECO:0000305" key="11">
    <source>
    </source>
</evidence>
<accession>P9WGM9</accession>
<accession>L0T5H1</accession>
<accession>O53894</accession>
<accession>Q7D914</accession>
<sequence>MSVRILVVDDDRAVRESLRRSLSFNGYSVELAHDGVEALDMIASDRPDALVLDVMMPRLDGLEVCRQLRGTGDDLPILVLTARDSVSERVAGLDAGADDYLPKPFALEELLARMRALLRRTKPEDAAESMAMRFSDLTLDPVTREVNRGQRRISLTRTEFALLEMLIANPRRVLTRSRILEEVWGFDFPTSGNALEVYVGYLRRKTEADGEPRLIHTVRGVGYVLRETPP</sequence>
<gene>
    <name type="primary">mprA</name>
    <name type="ordered locus">Rv0981</name>
</gene>
<proteinExistence type="evidence at protein level"/>
<dbReference type="EMBL" id="AL123456">
    <property type="protein sequence ID" value="CCP43731.1"/>
    <property type="status" value="ALT_INIT"/>
    <property type="molecule type" value="Genomic_DNA"/>
</dbReference>
<dbReference type="PIR" id="A70821">
    <property type="entry name" value="A70821"/>
</dbReference>
<dbReference type="RefSeq" id="NP_215496.2">
    <property type="nucleotide sequence ID" value="NC_000962.3"/>
</dbReference>
<dbReference type="SMR" id="P9WGM9"/>
<dbReference type="FunCoup" id="P9WGM9">
    <property type="interactions" value="66"/>
</dbReference>
<dbReference type="STRING" id="83332.Rv0981"/>
<dbReference type="PaxDb" id="83332-Rv0981"/>
<dbReference type="DNASU" id="885038"/>
<dbReference type="GeneID" id="885038"/>
<dbReference type="KEGG" id="mtu:Rv0981"/>
<dbReference type="TubercuList" id="Rv0981"/>
<dbReference type="eggNOG" id="COG0745">
    <property type="taxonomic scope" value="Bacteria"/>
</dbReference>
<dbReference type="InParanoid" id="P9WGM9"/>
<dbReference type="OrthoDB" id="4760923at2"/>
<dbReference type="PhylomeDB" id="P9WGM9"/>
<dbReference type="Proteomes" id="UP000001584">
    <property type="component" value="Chromosome"/>
</dbReference>
<dbReference type="GO" id="GO:0005829">
    <property type="term" value="C:cytosol"/>
    <property type="evidence" value="ECO:0000318"/>
    <property type="project" value="GO_Central"/>
</dbReference>
<dbReference type="GO" id="GO:0009274">
    <property type="term" value="C:peptidoglycan-based cell wall"/>
    <property type="evidence" value="ECO:0007005"/>
    <property type="project" value="MTBBASE"/>
</dbReference>
<dbReference type="GO" id="GO:0005886">
    <property type="term" value="C:plasma membrane"/>
    <property type="evidence" value="ECO:0007005"/>
    <property type="project" value="MTBBASE"/>
</dbReference>
<dbReference type="GO" id="GO:0032993">
    <property type="term" value="C:protein-DNA complex"/>
    <property type="evidence" value="ECO:0000318"/>
    <property type="project" value="GO_Central"/>
</dbReference>
<dbReference type="GO" id="GO:0003677">
    <property type="term" value="F:DNA binding"/>
    <property type="evidence" value="ECO:0000314"/>
    <property type="project" value="MTBBASE"/>
</dbReference>
<dbReference type="GO" id="GO:0000156">
    <property type="term" value="F:phosphorelay response regulator activity"/>
    <property type="evidence" value="ECO:0000318"/>
    <property type="project" value="GO_Central"/>
</dbReference>
<dbReference type="GO" id="GO:0000976">
    <property type="term" value="F:transcription cis-regulatory region binding"/>
    <property type="evidence" value="ECO:0000318"/>
    <property type="project" value="GO_Central"/>
</dbReference>
<dbReference type="GO" id="GO:0045892">
    <property type="term" value="P:negative regulation of DNA-templated transcription"/>
    <property type="evidence" value="ECO:0000314"/>
    <property type="project" value="MTBBASE"/>
</dbReference>
<dbReference type="GO" id="GO:0000160">
    <property type="term" value="P:phosphorelay signal transduction system"/>
    <property type="evidence" value="ECO:0000314"/>
    <property type="project" value="MTBBASE"/>
</dbReference>
<dbReference type="GO" id="GO:0045893">
    <property type="term" value="P:positive regulation of DNA-templated transcription"/>
    <property type="evidence" value="ECO:0000314"/>
    <property type="project" value="MTBBASE"/>
</dbReference>
<dbReference type="GO" id="GO:0006355">
    <property type="term" value="P:regulation of DNA-templated transcription"/>
    <property type="evidence" value="ECO:0000314"/>
    <property type="project" value="MTBBASE"/>
</dbReference>
<dbReference type="GO" id="GO:0010446">
    <property type="term" value="P:response to alkaline pH"/>
    <property type="evidence" value="ECO:0000270"/>
    <property type="project" value="UniProtKB"/>
</dbReference>
<dbReference type="CDD" id="cd17627">
    <property type="entry name" value="REC_OmpR_PrrA-like"/>
    <property type="match status" value="1"/>
</dbReference>
<dbReference type="CDD" id="cd00383">
    <property type="entry name" value="trans_reg_C"/>
    <property type="match status" value="1"/>
</dbReference>
<dbReference type="FunFam" id="3.40.50.2300:FF:000001">
    <property type="entry name" value="DNA-binding response regulator PhoB"/>
    <property type="match status" value="1"/>
</dbReference>
<dbReference type="FunFam" id="1.10.10.10:FF:000005">
    <property type="entry name" value="Two-component system response regulator"/>
    <property type="match status" value="1"/>
</dbReference>
<dbReference type="Gene3D" id="3.40.50.2300">
    <property type="match status" value="1"/>
</dbReference>
<dbReference type="Gene3D" id="6.10.250.690">
    <property type="match status" value="1"/>
</dbReference>
<dbReference type="Gene3D" id="1.10.10.10">
    <property type="entry name" value="Winged helix-like DNA-binding domain superfamily/Winged helix DNA-binding domain"/>
    <property type="match status" value="1"/>
</dbReference>
<dbReference type="InterPro" id="IPR011006">
    <property type="entry name" value="CheY-like_superfamily"/>
</dbReference>
<dbReference type="InterPro" id="IPR001867">
    <property type="entry name" value="OmpR/PhoB-type_DNA-bd"/>
</dbReference>
<dbReference type="InterPro" id="IPR001789">
    <property type="entry name" value="Sig_transdc_resp-reg_receiver"/>
</dbReference>
<dbReference type="InterPro" id="IPR039420">
    <property type="entry name" value="WalR-like"/>
</dbReference>
<dbReference type="InterPro" id="IPR036388">
    <property type="entry name" value="WH-like_DNA-bd_sf"/>
</dbReference>
<dbReference type="PANTHER" id="PTHR48111">
    <property type="entry name" value="REGULATOR OF RPOS"/>
    <property type="match status" value="1"/>
</dbReference>
<dbReference type="PANTHER" id="PTHR48111:SF22">
    <property type="entry name" value="REGULATOR OF RPOS"/>
    <property type="match status" value="1"/>
</dbReference>
<dbReference type="Pfam" id="PF00072">
    <property type="entry name" value="Response_reg"/>
    <property type="match status" value="1"/>
</dbReference>
<dbReference type="Pfam" id="PF00486">
    <property type="entry name" value="Trans_reg_C"/>
    <property type="match status" value="1"/>
</dbReference>
<dbReference type="SMART" id="SM00448">
    <property type="entry name" value="REC"/>
    <property type="match status" value="1"/>
</dbReference>
<dbReference type="SMART" id="SM00862">
    <property type="entry name" value="Trans_reg_C"/>
    <property type="match status" value="1"/>
</dbReference>
<dbReference type="SUPFAM" id="SSF52172">
    <property type="entry name" value="CheY-like"/>
    <property type="match status" value="1"/>
</dbReference>
<dbReference type="PROSITE" id="PS51755">
    <property type="entry name" value="OMPR_PHOB"/>
    <property type="match status" value="1"/>
</dbReference>
<dbReference type="PROSITE" id="PS50110">
    <property type="entry name" value="RESPONSE_REGULATORY"/>
    <property type="match status" value="1"/>
</dbReference>
<keyword id="KW-0010">Activator</keyword>
<keyword id="KW-0963">Cytoplasm</keyword>
<keyword id="KW-0238">DNA-binding</keyword>
<keyword id="KW-0597">Phosphoprotein</keyword>
<keyword id="KW-1185">Reference proteome</keyword>
<keyword id="KW-0678">Repressor</keyword>
<keyword id="KW-0346">Stress response</keyword>
<keyword id="KW-0804">Transcription</keyword>
<keyword id="KW-0805">Transcription regulation</keyword>
<keyword id="KW-0902">Two-component regulatory system</keyword>
<keyword id="KW-0843">Virulence</keyword>
<comment type="function">
    <text evidence="4 5 6 7 8">Member of the two-component regulatory system MprB/MprA which contributes to maintaining a balance among several systems involved in stress resistance and is required for establishment and maintenance of persistent infection in the host. Functions as a transcriptional regulator that recognizes a 19-bp nucleotide motif comprizing two loosely conserved 8-bp direct DNA-binding motif repeats separated by a 3-bp spacer region. MprB/MprA is involved in regulation of numerous stress-responsive genes, including up-regulation of two sigma factors, sigE and sigB as well as pepD and mprA, and repression of multiple genes from regulons associated with hypoxia, starvation and iron metabolism. The majority of genes regulated by MprB/MprA under a particular stress condition are different from those induced during normal growth, but several genes are commonly regulated under more than one condition.</text>
</comment>
<comment type="subunit">
    <text evidence="11">Monomer. Interaction with each conserved 8-bp repeat requires tandem binding by two protein monomers (Probable).</text>
</comment>
<comment type="subcellular location">
    <subcellularLocation>
        <location evidence="9">Cytoplasm</location>
    </subcellularLocation>
</comment>
<comment type="induction">
    <text evidence="3 4 7">Autoregulated. Differentially up-regulated under different stress conditions, such as low concentrations of detergents and alkaline pH. Induced by low concentrations of sodium dodecyl sulfate (SDS) in a SigE-dependent manner. In strain ATCC 25618 / H37Rv, repressed during growth in macrophages.</text>
</comment>
<comment type="PTM">
    <text evidence="5">Phosphorylated and dephosphorylated by MprB.</text>
</comment>
<comment type="miscellaneous">
    <text>Phosphorylation is not required for binding to DNA in vitro. However, phosphorylation enhances DNA binding and is required for activity in vivo.</text>
</comment>
<comment type="sequence caution" evidence="9">
    <conflict type="erroneous initiation">
        <sequence resource="EMBL-CDS" id="CCP43731"/>
    </conflict>
    <text>Truncated N-terminus.</text>
</comment>
<organism>
    <name type="scientific">Mycobacterium tuberculosis (strain ATCC 25618 / H37Rv)</name>
    <dbReference type="NCBI Taxonomy" id="83332"/>
    <lineage>
        <taxon>Bacteria</taxon>
        <taxon>Bacillati</taxon>
        <taxon>Actinomycetota</taxon>
        <taxon>Actinomycetes</taxon>
        <taxon>Mycobacteriales</taxon>
        <taxon>Mycobacteriaceae</taxon>
        <taxon>Mycobacterium</taxon>
        <taxon>Mycobacterium tuberculosis complex</taxon>
    </lineage>
</organism>